<organism>
    <name type="scientific">Natronomonas pharaonis (strain ATCC 35678 / DSM 2160 / CIP 103997 / JCM 8858 / NBRC 14720 / NCIMB 2260 / Gabara)</name>
    <name type="common">Halobacterium pharaonis</name>
    <dbReference type="NCBI Taxonomy" id="348780"/>
    <lineage>
        <taxon>Archaea</taxon>
        <taxon>Methanobacteriati</taxon>
        <taxon>Methanobacteriota</taxon>
        <taxon>Stenosarchaea group</taxon>
        <taxon>Halobacteria</taxon>
        <taxon>Halobacteriales</taxon>
        <taxon>Haloarculaceae</taxon>
        <taxon>Natronomonas</taxon>
    </lineage>
</organism>
<reference key="1">
    <citation type="journal article" date="2005" name="Genome Res.">
        <title>Living with two extremes: conclusions from the genome sequence of Natronomonas pharaonis.</title>
        <authorList>
            <person name="Falb M."/>
            <person name="Pfeiffer F."/>
            <person name="Palm P."/>
            <person name="Rodewald K."/>
            <person name="Hickmann V."/>
            <person name="Tittor J."/>
            <person name="Oesterhelt D."/>
        </authorList>
    </citation>
    <scope>NUCLEOTIDE SEQUENCE [LARGE SCALE GENOMIC DNA]</scope>
    <source>
        <strain>ATCC 35678 / DSM 2160 / CIP 103997 / JCM 8858 / NBRC 14720 / NCIMB 2260 / Gabara</strain>
    </source>
</reference>
<reference key="2">
    <citation type="journal article" date="2012" name="J. Bacteriol.">
        <title>Archaeosortases and exosortases are widely distributed systems linking membrane transit with posttranslational modification.</title>
        <authorList>
            <person name="Haft D.H."/>
            <person name="Payne S.H."/>
            <person name="Selengut J.D."/>
        </authorList>
    </citation>
    <scope>NOMENCLATURE</scope>
    <scope>GENE FAMILY</scope>
</reference>
<name>ARTA_NATPD</name>
<sequence>MSLLEAIAELHVIPYTDVLAWVVMAAFIAGVAADYRDNLLAARRLTAGAWWLFAVFWFVLIQHFAFVHRSVVQTVLILIAVPACLYVGWLVFAGRDSLLTLSRAVAFMTVIYLPFETSELARGLLIEAVAFQTATVIDALSLADGMEYMQDPDEGSTLMNTFWFPETGRASRVVFECTGIGAMSIFGGLIAAVNAPLRRKAVGIALSISIIWVLNIGRNVFIALANGYQWFAYSWLEGPIMALFGLTDPARVSFFVADRVLAQLLAVVALAGLAWFIARWVPELLDIAEELLSIVGIDVELHHPSVDRTDTDPAD</sequence>
<keyword id="KW-1003">Cell membrane</keyword>
<keyword id="KW-0378">Hydrolase</keyword>
<keyword id="KW-0472">Membrane</keyword>
<keyword id="KW-0645">Protease</keyword>
<keyword id="KW-1185">Reference proteome</keyword>
<keyword id="KW-0812">Transmembrane</keyword>
<keyword id="KW-1133">Transmembrane helix</keyword>
<accession>Q3IS61</accession>
<comment type="function">
    <text evidence="1">Transpeptidase that recognizes and modifies its substrate by proteolytic cleavage of a sorting signal. Following cleavage, a covalent intermediate is formed via a thioester bond between the archaeosortase and its substrate, which is then transferred and covalently attached to the cell membrane.</text>
</comment>
<comment type="subcellular location">
    <subcellularLocation>
        <location evidence="4">Cell membrane</location>
        <topology evidence="2">Multi-pass membrane protein</topology>
    </subcellularLocation>
</comment>
<comment type="similarity">
    <text evidence="5">Belongs to the exosortase/archaeosortase family. Archaeosortase A subfamily.</text>
</comment>
<dbReference type="EC" id="3.4.22.-" evidence="1"/>
<dbReference type="EMBL" id="CR936257">
    <property type="protein sequence ID" value="CAI49027.1"/>
    <property type="molecule type" value="Genomic_DNA"/>
</dbReference>
<dbReference type="RefSeq" id="WP_011322659.1">
    <property type="nucleotide sequence ID" value="NC_007426.1"/>
</dbReference>
<dbReference type="STRING" id="348780.NP_1872A"/>
<dbReference type="EnsemblBacteria" id="CAI49027">
    <property type="protein sequence ID" value="CAI49027"/>
    <property type="gene ID" value="NP_1872A"/>
</dbReference>
<dbReference type="GeneID" id="3701284"/>
<dbReference type="KEGG" id="nph:NP_1872A"/>
<dbReference type="eggNOG" id="arCOG04471">
    <property type="taxonomic scope" value="Archaea"/>
</dbReference>
<dbReference type="HOGENOM" id="CLU_065734_1_0_2"/>
<dbReference type="OrthoDB" id="200496at2157"/>
<dbReference type="Proteomes" id="UP000002698">
    <property type="component" value="Chromosome"/>
</dbReference>
<dbReference type="GO" id="GO:0005886">
    <property type="term" value="C:plasma membrane"/>
    <property type="evidence" value="ECO:0007669"/>
    <property type="project" value="UniProtKB-SubCell"/>
</dbReference>
<dbReference type="GO" id="GO:0008233">
    <property type="term" value="F:peptidase activity"/>
    <property type="evidence" value="ECO:0007669"/>
    <property type="project" value="UniProtKB-KW"/>
</dbReference>
<dbReference type="GO" id="GO:0006508">
    <property type="term" value="P:proteolysis"/>
    <property type="evidence" value="ECO:0007669"/>
    <property type="project" value="UniProtKB-KW"/>
</dbReference>
<dbReference type="InterPro" id="IPR014522">
    <property type="entry name" value="ArtA"/>
</dbReference>
<dbReference type="InterPro" id="IPR026392">
    <property type="entry name" value="Exo/Archaeosortase_dom"/>
</dbReference>
<dbReference type="NCBIfam" id="TIGR04178">
    <property type="entry name" value="exo_archaeo"/>
    <property type="match status" value="1"/>
</dbReference>
<dbReference type="NCBIfam" id="TIGR04125">
    <property type="entry name" value="exosort_PGF_TRM"/>
    <property type="match status" value="1"/>
</dbReference>
<dbReference type="PIRSF" id="PIRSF025737">
    <property type="entry name" value="Cyco1"/>
    <property type="match status" value="1"/>
</dbReference>
<feature type="chain" id="PRO_0000428765" description="Archaeosortase A">
    <location>
        <begin position="1"/>
        <end position="315"/>
    </location>
</feature>
<feature type="transmembrane region" description="Helical" evidence="2">
    <location>
        <begin position="12"/>
        <end position="32"/>
    </location>
</feature>
<feature type="transmembrane region" description="Helical" evidence="2">
    <location>
        <begin position="47"/>
        <end position="67"/>
    </location>
</feature>
<feature type="transmembrane region" description="Helical" evidence="2">
    <location>
        <begin position="74"/>
        <end position="94"/>
    </location>
</feature>
<feature type="transmembrane region" description="Helical" evidence="2">
    <location>
        <begin position="173"/>
        <end position="193"/>
    </location>
</feature>
<feature type="transmembrane region" description="Helical" evidence="2">
    <location>
        <begin position="204"/>
        <end position="224"/>
    </location>
</feature>
<feature type="transmembrane region" description="Helical" evidence="2">
    <location>
        <begin position="227"/>
        <end position="247"/>
    </location>
</feature>
<feature type="transmembrane region" description="Helical" evidence="2">
    <location>
        <begin position="260"/>
        <end position="280"/>
    </location>
</feature>
<feature type="active site" description="Acyl-thioester intermediate" evidence="1">
    <location>
        <position position="177"/>
    </location>
</feature>
<feature type="active site" description="Proton donor" evidence="1">
    <location>
        <position position="218"/>
    </location>
</feature>
<feature type="site" description="Transition state stabilizer" evidence="1">
    <location>
        <position position="259"/>
    </location>
</feature>
<proteinExistence type="inferred from homology"/>
<gene>
    <name evidence="3" type="primary">artA</name>
    <name type="ordered locus">NP_1872A</name>
</gene>
<protein>
    <recommendedName>
        <fullName evidence="3">Archaeosortase A</fullName>
        <ecNumber evidence="1">3.4.22.-</ecNumber>
    </recommendedName>
</protein>
<evidence type="ECO:0000250" key="1">
    <source>
        <dbReference type="UniProtKB" id="D4GUZ4"/>
    </source>
</evidence>
<evidence type="ECO:0000255" key="2"/>
<evidence type="ECO:0000303" key="3">
    <source>
    </source>
</evidence>
<evidence type="ECO:0000305" key="4"/>
<evidence type="ECO:0000305" key="5">
    <source>
    </source>
</evidence>